<keyword id="KW-1015">Disulfide bond</keyword>
<keyword id="KW-1206">Fibrinogenolytic toxin</keyword>
<keyword id="KW-0325">Glycoprotein</keyword>
<keyword id="KW-1199">Hemostasis impairing toxin</keyword>
<keyword id="KW-0378">Hydrolase</keyword>
<keyword id="KW-0645">Protease</keyword>
<keyword id="KW-0964">Secreted</keyword>
<keyword id="KW-0720">Serine protease</keyword>
<keyword id="KW-0732">Signal</keyword>
<keyword id="KW-0800">Toxin</keyword>
<name>VSPY_MACLB</name>
<protein>
    <recommendedName>
        <fullName>Chymotrypsin-like protease VLCTLP</fullName>
        <ecNumber>3.4.21.-</ecNumber>
    </recommendedName>
    <alternativeName>
        <fullName>Snake venom serine protease</fullName>
        <shortName>SVSP</shortName>
    </alternativeName>
    <alternativeName>
        <fullName>Vipera Lebetina with chymotrypsin-like proteolytic activity</fullName>
    </alternativeName>
</protein>
<evidence type="ECO:0000250" key="1"/>
<evidence type="ECO:0000255" key="2"/>
<evidence type="ECO:0000255" key="3">
    <source>
        <dbReference type="PROSITE-ProRule" id="PRU00274"/>
    </source>
</evidence>
<evidence type="ECO:0000269" key="4">
    <source>
    </source>
</evidence>
<evidence type="ECO:0000305" key="5"/>
<evidence type="ECO:0000305" key="6">
    <source>
    </source>
</evidence>
<reference key="1">
    <citation type="journal article" date="2003" name="Thromb. Haemost.">
        <title>Anticoagulant serine fibrinogenases from Vipera lebetina venom: structure-function relationships.</title>
        <authorList>
            <person name="Siigur E."/>
            <person name="Aaspollu A."/>
            <person name="Siigur J."/>
        </authorList>
    </citation>
    <scope>NUCLEOTIDE SEQUENCE [MRNA]</scope>
    <source>
        <tissue>Venom gland</tissue>
    </source>
</reference>
<reference key="2">
    <citation type="journal article" date="2011" name="Biochimie">
        <title>A new tyrosine-specific chymotrypsin-like and angiotensin-degrading serine proteinase from Vipera lebetina snake venom.</title>
        <authorList>
            <person name="Siigur E."/>
            <person name="Tonismagi K."/>
            <person name="Trummal K."/>
            <person name="Samel M."/>
            <person name="Vija H."/>
            <person name="Aaspollu A."/>
            <person name="Ronnholm G."/>
            <person name="Subbi J."/>
            <person name="Kalkkinen N."/>
            <person name="Siigur J."/>
        </authorList>
    </citation>
    <scope>NUCLEOTIDE SEQUENCE [MRNA]</scope>
    <scope>FUNCTION</scope>
    <scope>CATALYTIC ACTIVITY</scope>
    <scope>ACTIVITY REGULATION</scope>
    <scope>MASS SPECTROMETRY</scope>
    <source>
        <tissue>Venom</tissue>
        <tissue>Venom gland</tissue>
    </source>
</reference>
<sequence>MVLIRVLANLLLLQLSYAQKSSELVVGGDECNINEHRSLVFLYNSSFGCGGTLINQQWVLSAAHCDMENVQIYLGLHNLRLRNQDEQIRVAEEKFFCLSNKSYTKWDKDIMLIRLNSSVTYNTHIAPLSLPSSPPRVGSVCRIMGWGAITSPNETFPNVPHCANINILRYSVCRAAYRGLPAQSRTLCAGILQGGIGSCMGDSGGPLICNGEIQGIVSWGDDICAQPHKPVHYTKVFDYSDWIQSIIAGNTTATCPL</sequence>
<dbReference type="EC" id="3.4.21.-"/>
<dbReference type="EMBL" id="GU570568">
    <property type="protein sequence ID" value="ADN04919.1"/>
    <property type="molecule type" value="mRNA"/>
</dbReference>
<dbReference type="SMR" id="E0Y421"/>
<dbReference type="GO" id="GO:0005576">
    <property type="term" value="C:extracellular region"/>
    <property type="evidence" value="ECO:0007669"/>
    <property type="project" value="UniProtKB-SubCell"/>
</dbReference>
<dbReference type="GO" id="GO:0030141">
    <property type="term" value="C:secretory granule"/>
    <property type="evidence" value="ECO:0007669"/>
    <property type="project" value="TreeGrafter"/>
</dbReference>
<dbReference type="GO" id="GO:0004252">
    <property type="term" value="F:serine-type endopeptidase activity"/>
    <property type="evidence" value="ECO:0007669"/>
    <property type="project" value="InterPro"/>
</dbReference>
<dbReference type="GO" id="GO:0090729">
    <property type="term" value="F:toxin activity"/>
    <property type="evidence" value="ECO:0007669"/>
    <property type="project" value="UniProtKB-KW"/>
</dbReference>
<dbReference type="GO" id="GO:0006508">
    <property type="term" value="P:proteolysis"/>
    <property type="evidence" value="ECO:0007669"/>
    <property type="project" value="UniProtKB-KW"/>
</dbReference>
<dbReference type="CDD" id="cd00190">
    <property type="entry name" value="Tryp_SPc"/>
    <property type="match status" value="1"/>
</dbReference>
<dbReference type="FunFam" id="2.40.10.10:FF:000158">
    <property type="entry name" value="Thrombin-like enzyme saxthrombin"/>
    <property type="match status" value="1"/>
</dbReference>
<dbReference type="Gene3D" id="2.40.10.10">
    <property type="entry name" value="Trypsin-like serine proteases"/>
    <property type="match status" value="2"/>
</dbReference>
<dbReference type="InterPro" id="IPR009003">
    <property type="entry name" value="Peptidase_S1_PA"/>
</dbReference>
<dbReference type="InterPro" id="IPR043504">
    <property type="entry name" value="Peptidase_S1_PA_chymotrypsin"/>
</dbReference>
<dbReference type="InterPro" id="IPR001314">
    <property type="entry name" value="Peptidase_S1A"/>
</dbReference>
<dbReference type="InterPro" id="IPR001254">
    <property type="entry name" value="Trypsin_dom"/>
</dbReference>
<dbReference type="InterPro" id="IPR018114">
    <property type="entry name" value="TRYPSIN_HIS"/>
</dbReference>
<dbReference type="InterPro" id="IPR033116">
    <property type="entry name" value="TRYPSIN_SER"/>
</dbReference>
<dbReference type="PANTHER" id="PTHR24271:SF47">
    <property type="entry name" value="KALLIKREIN-1"/>
    <property type="match status" value="1"/>
</dbReference>
<dbReference type="PANTHER" id="PTHR24271">
    <property type="entry name" value="KALLIKREIN-RELATED"/>
    <property type="match status" value="1"/>
</dbReference>
<dbReference type="Pfam" id="PF00089">
    <property type="entry name" value="Trypsin"/>
    <property type="match status" value="1"/>
</dbReference>
<dbReference type="PRINTS" id="PR00722">
    <property type="entry name" value="CHYMOTRYPSIN"/>
</dbReference>
<dbReference type="SMART" id="SM00020">
    <property type="entry name" value="Tryp_SPc"/>
    <property type="match status" value="1"/>
</dbReference>
<dbReference type="SUPFAM" id="SSF50494">
    <property type="entry name" value="Trypsin-like serine proteases"/>
    <property type="match status" value="1"/>
</dbReference>
<dbReference type="PROSITE" id="PS50240">
    <property type="entry name" value="TRYPSIN_DOM"/>
    <property type="match status" value="1"/>
</dbReference>
<dbReference type="PROSITE" id="PS00134">
    <property type="entry name" value="TRYPSIN_HIS"/>
    <property type="match status" value="1"/>
</dbReference>
<dbReference type="PROSITE" id="PS00135">
    <property type="entry name" value="TRYPSIN_SER"/>
    <property type="match status" value="1"/>
</dbReference>
<accession>E0Y421</accession>
<proteinExistence type="evidence at protein level"/>
<feature type="signal peptide" evidence="2">
    <location>
        <begin position="1"/>
        <end position="18"/>
    </location>
</feature>
<feature type="propeptide" id="PRO_0000416401" evidence="1">
    <location>
        <begin position="19"/>
        <end position="24"/>
    </location>
</feature>
<feature type="chain" id="PRO_0000416402" description="Chymotrypsin-like protease VLCTLP">
    <location>
        <begin position="25"/>
        <end position="257"/>
    </location>
</feature>
<feature type="domain" description="Peptidase S1" evidence="3">
    <location>
        <begin position="25"/>
        <end position="248"/>
    </location>
</feature>
<feature type="active site" description="Charge relay system" evidence="1">
    <location>
        <position position="64"/>
    </location>
</feature>
<feature type="active site" description="Charge relay system" evidence="1">
    <location>
        <position position="109"/>
    </location>
</feature>
<feature type="active site" description="Charge relay system" evidence="1">
    <location>
        <position position="203"/>
    </location>
</feature>
<feature type="glycosylation site" description="N-linked (GlcNAc...) asparagine" evidence="2">
    <location>
        <position position="44"/>
    </location>
</feature>
<feature type="glycosylation site" description="N-linked (GlcNAc...) asparagine" evidence="2">
    <location>
        <position position="100"/>
    </location>
</feature>
<feature type="glycosylation site" description="N-linked (GlcNAc...) asparagine" evidence="2">
    <location>
        <position position="116"/>
    </location>
</feature>
<feature type="glycosylation site" description="N-linked (GlcNAc...) asparagine" evidence="2">
    <location>
        <position position="153"/>
    </location>
</feature>
<feature type="glycosylation site" description="N-linked (GlcNAc...) asparagine" evidence="2">
    <location>
        <position position="250"/>
    </location>
</feature>
<feature type="disulfide bond" evidence="3">
    <location>
        <begin position="31"/>
        <end position="162"/>
    </location>
</feature>
<feature type="disulfide bond" evidence="3">
    <location>
        <begin position="49"/>
        <end position="65"/>
    </location>
</feature>
<feature type="disulfide bond" evidence="3">
    <location>
        <begin position="97"/>
        <end position="255"/>
    </location>
</feature>
<feature type="disulfide bond" evidence="3">
    <location>
        <begin position="141"/>
        <end position="209"/>
    </location>
</feature>
<feature type="disulfide bond" evidence="3">
    <location>
        <begin position="173"/>
        <end position="188"/>
    </location>
</feature>
<feature type="disulfide bond" evidence="3">
    <location>
        <begin position="199"/>
        <end position="224"/>
    </location>
</feature>
<organism>
    <name type="scientific">Macrovipera lebetinus</name>
    <name type="common">Levantine viper</name>
    <name type="synonym">Vipera lebetina</name>
    <dbReference type="NCBI Taxonomy" id="3148341"/>
    <lineage>
        <taxon>Eukaryota</taxon>
        <taxon>Metazoa</taxon>
        <taxon>Chordata</taxon>
        <taxon>Craniata</taxon>
        <taxon>Vertebrata</taxon>
        <taxon>Euteleostomi</taxon>
        <taxon>Lepidosauria</taxon>
        <taxon>Squamata</taxon>
        <taxon>Bifurcata</taxon>
        <taxon>Unidentata</taxon>
        <taxon>Episquamata</taxon>
        <taxon>Toxicofera</taxon>
        <taxon>Serpentes</taxon>
        <taxon>Colubroidea</taxon>
        <taxon>Viperidae</taxon>
        <taxon>Viperinae</taxon>
        <taxon>Macrovipera</taxon>
    </lineage>
</organism>
<comment type="function">
    <text evidence="4">Snake venom serine protease with tyrosine-specific chymotrypsin-like activity. Hydrolyzes the N-acetyl-L-tyrosine ethyl ester (ATEE). Has weak fibrinogenolytic activity. Weakly hydrolyzes azocasein, Aalpha-chain (FGA) and more slowly Bbeta-chain (FGB) of fibrinogen. Optimal substrates are angiotensins I and II (AGT).</text>
</comment>
<comment type="activity regulation">
    <text evidence="4">Inhibited by PMSF.</text>
</comment>
<comment type="subunit">
    <text evidence="1">Monomer.</text>
</comment>
<comment type="subcellular location">
    <subcellularLocation>
        <location>Secreted</location>
    </subcellularLocation>
</comment>
<comment type="tissue specificity">
    <text>Expressed by the venom gland.</text>
</comment>
<comment type="PTM">
    <text>Partial deglycosylation has not effect on enzyme activity.</text>
</comment>
<comment type="mass spectrometry"/>
<comment type="miscellaneous">
    <text evidence="6">Negative results: does not cleave the gamma chain of fibrinogen, does not show fibrinolytic activity, and does not induce or inhibit platelet aggregation.</text>
</comment>
<comment type="similarity">
    <text evidence="3">Belongs to the peptidase S1 family. Snake venom subfamily.</text>
</comment>
<comment type="caution">
    <text evidence="5">The nucleotide accession number corresponding to this protein cited in PubMed:20950666 is wrongly indicated as being GU570565.</text>
</comment>
<comment type="caution">
    <text evidence="5">The sequence provided in PubMed:12719779 is indicated as being Beta-fibrinogenase (VLBF).</text>
</comment>